<organism>
    <name type="scientific">Buchnera aphidicola subsp. Schizaphis graminum (strain Sg)</name>
    <dbReference type="NCBI Taxonomy" id="198804"/>
    <lineage>
        <taxon>Bacteria</taxon>
        <taxon>Pseudomonadati</taxon>
        <taxon>Pseudomonadota</taxon>
        <taxon>Gammaproteobacteria</taxon>
        <taxon>Enterobacterales</taxon>
        <taxon>Erwiniaceae</taxon>
        <taxon>Buchnera</taxon>
    </lineage>
</organism>
<dbReference type="EC" id="2.7.6.1" evidence="1"/>
<dbReference type="EMBL" id="AE013218">
    <property type="protein sequence ID" value="AAM67730.1"/>
    <property type="molecule type" value="Genomic_DNA"/>
</dbReference>
<dbReference type="RefSeq" id="WP_011053697.1">
    <property type="nucleotide sequence ID" value="NC_004061.1"/>
</dbReference>
<dbReference type="SMR" id="Q8K9X2"/>
<dbReference type="STRING" id="198804.BUsg_163"/>
<dbReference type="GeneID" id="93003632"/>
<dbReference type="KEGG" id="bas:BUsg_163"/>
<dbReference type="eggNOG" id="COG0462">
    <property type="taxonomic scope" value="Bacteria"/>
</dbReference>
<dbReference type="HOGENOM" id="CLU_033546_2_0_6"/>
<dbReference type="UniPathway" id="UPA00087">
    <property type="reaction ID" value="UER00172"/>
</dbReference>
<dbReference type="Proteomes" id="UP000000416">
    <property type="component" value="Chromosome"/>
</dbReference>
<dbReference type="GO" id="GO:0005737">
    <property type="term" value="C:cytoplasm"/>
    <property type="evidence" value="ECO:0007669"/>
    <property type="project" value="UniProtKB-SubCell"/>
</dbReference>
<dbReference type="GO" id="GO:0002189">
    <property type="term" value="C:ribose phosphate diphosphokinase complex"/>
    <property type="evidence" value="ECO:0007669"/>
    <property type="project" value="TreeGrafter"/>
</dbReference>
<dbReference type="GO" id="GO:0005524">
    <property type="term" value="F:ATP binding"/>
    <property type="evidence" value="ECO:0007669"/>
    <property type="project" value="UniProtKB-KW"/>
</dbReference>
<dbReference type="GO" id="GO:0016301">
    <property type="term" value="F:kinase activity"/>
    <property type="evidence" value="ECO:0007669"/>
    <property type="project" value="UniProtKB-KW"/>
</dbReference>
<dbReference type="GO" id="GO:0000287">
    <property type="term" value="F:magnesium ion binding"/>
    <property type="evidence" value="ECO:0007669"/>
    <property type="project" value="UniProtKB-UniRule"/>
</dbReference>
<dbReference type="GO" id="GO:0004749">
    <property type="term" value="F:ribose phosphate diphosphokinase activity"/>
    <property type="evidence" value="ECO:0007669"/>
    <property type="project" value="UniProtKB-UniRule"/>
</dbReference>
<dbReference type="GO" id="GO:0006015">
    <property type="term" value="P:5-phosphoribose 1-diphosphate biosynthetic process"/>
    <property type="evidence" value="ECO:0007669"/>
    <property type="project" value="UniProtKB-UniRule"/>
</dbReference>
<dbReference type="GO" id="GO:0006164">
    <property type="term" value="P:purine nucleotide biosynthetic process"/>
    <property type="evidence" value="ECO:0007669"/>
    <property type="project" value="TreeGrafter"/>
</dbReference>
<dbReference type="GO" id="GO:0009156">
    <property type="term" value="P:ribonucleoside monophosphate biosynthetic process"/>
    <property type="evidence" value="ECO:0007669"/>
    <property type="project" value="InterPro"/>
</dbReference>
<dbReference type="CDD" id="cd06223">
    <property type="entry name" value="PRTases_typeI"/>
    <property type="match status" value="1"/>
</dbReference>
<dbReference type="FunFam" id="3.40.50.2020:FF:000001">
    <property type="entry name" value="Ribose-phosphate pyrophosphokinase"/>
    <property type="match status" value="1"/>
</dbReference>
<dbReference type="Gene3D" id="3.40.50.2020">
    <property type="match status" value="2"/>
</dbReference>
<dbReference type="HAMAP" id="MF_00583_B">
    <property type="entry name" value="RibP_PPkinase_B"/>
    <property type="match status" value="1"/>
</dbReference>
<dbReference type="InterPro" id="IPR000842">
    <property type="entry name" value="PRib_PP_synth_CS"/>
</dbReference>
<dbReference type="InterPro" id="IPR029099">
    <property type="entry name" value="Pribosyltran_N"/>
</dbReference>
<dbReference type="InterPro" id="IPR000836">
    <property type="entry name" value="PRibTrfase_dom"/>
</dbReference>
<dbReference type="InterPro" id="IPR029057">
    <property type="entry name" value="PRTase-like"/>
</dbReference>
<dbReference type="InterPro" id="IPR005946">
    <property type="entry name" value="Rib-P_diPkinase"/>
</dbReference>
<dbReference type="InterPro" id="IPR037515">
    <property type="entry name" value="Rib-P_diPkinase_bac"/>
</dbReference>
<dbReference type="NCBIfam" id="NF002320">
    <property type="entry name" value="PRK01259.1"/>
    <property type="match status" value="1"/>
</dbReference>
<dbReference type="NCBIfam" id="TIGR01251">
    <property type="entry name" value="ribP_PPkin"/>
    <property type="match status" value="1"/>
</dbReference>
<dbReference type="PANTHER" id="PTHR10210">
    <property type="entry name" value="RIBOSE-PHOSPHATE DIPHOSPHOKINASE FAMILY MEMBER"/>
    <property type="match status" value="1"/>
</dbReference>
<dbReference type="PANTHER" id="PTHR10210:SF41">
    <property type="entry name" value="RIBOSE-PHOSPHATE PYROPHOSPHOKINASE 1, CHLOROPLASTIC"/>
    <property type="match status" value="1"/>
</dbReference>
<dbReference type="Pfam" id="PF14572">
    <property type="entry name" value="Pribosyl_synth"/>
    <property type="match status" value="1"/>
</dbReference>
<dbReference type="Pfam" id="PF13793">
    <property type="entry name" value="Pribosyltran_N"/>
    <property type="match status" value="1"/>
</dbReference>
<dbReference type="SMART" id="SM01400">
    <property type="entry name" value="Pribosyltran_N"/>
    <property type="match status" value="1"/>
</dbReference>
<dbReference type="SUPFAM" id="SSF53271">
    <property type="entry name" value="PRTase-like"/>
    <property type="match status" value="1"/>
</dbReference>
<dbReference type="PROSITE" id="PS00114">
    <property type="entry name" value="PRPP_SYNTHASE"/>
    <property type="match status" value="1"/>
</dbReference>
<sequence length="315" mass="34759">MPDMKLFAGNSIPKLAKFIAHRLYINLGNAAVGRFSDGEISVQINENVRGSDVFIIQSTCSPTNDNIMELVVMVDALRRASAGRITAVIPYFGYSRQDRRVRSARVPITAKVVADFLSSIGVDRVLTVDLHAEQIQGFFDVPVDNVFGSLILLEDMLQRELKNPIVVSPDIGGVVRARAIAKLLYDTDMAIIDKRRPRPNISQIMHIIGDVANRDCILVDDMIDTGGTLCKAAEALKERGAKRVFAYATHPIFSGKASENLKKSVIDEVVVCDTIPLEEKIRLLPNVRTLTLAGMLAEAIRRISNEESISAMFEH</sequence>
<protein>
    <recommendedName>
        <fullName evidence="1">Ribose-phosphate pyrophosphokinase</fullName>
        <shortName evidence="1">RPPK</shortName>
        <ecNumber evidence="1">2.7.6.1</ecNumber>
    </recommendedName>
    <alternativeName>
        <fullName evidence="1">5-phospho-D-ribosyl alpha-1-diphosphate synthase</fullName>
    </alternativeName>
    <alternativeName>
        <fullName evidence="1">Phosphoribosyl diphosphate synthase</fullName>
    </alternativeName>
    <alternativeName>
        <fullName evidence="1">Phosphoribosyl pyrophosphate synthase</fullName>
        <shortName evidence="1">P-Rib-PP synthase</shortName>
        <shortName evidence="1">PRPP synthase</shortName>
        <shortName evidence="1">PRPPase</shortName>
    </alternativeName>
</protein>
<accession>Q8K9X2</accession>
<comment type="function">
    <text evidence="1">Involved in the biosynthesis of the central metabolite phospho-alpha-D-ribosyl-1-pyrophosphate (PRPP) via the transfer of pyrophosphoryl group from ATP to 1-hydroxyl of ribose-5-phosphate (Rib-5-P).</text>
</comment>
<comment type="catalytic activity">
    <reaction evidence="1">
        <text>D-ribose 5-phosphate + ATP = 5-phospho-alpha-D-ribose 1-diphosphate + AMP + H(+)</text>
        <dbReference type="Rhea" id="RHEA:15609"/>
        <dbReference type="ChEBI" id="CHEBI:15378"/>
        <dbReference type="ChEBI" id="CHEBI:30616"/>
        <dbReference type="ChEBI" id="CHEBI:58017"/>
        <dbReference type="ChEBI" id="CHEBI:78346"/>
        <dbReference type="ChEBI" id="CHEBI:456215"/>
        <dbReference type="EC" id="2.7.6.1"/>
    </reaction>
</comment>
<comment type="cofactor">
    <cofactor evidence="1">
        <name>Mg(2+)</name>
        <dbReference type="ChEBI" id="CHEBI:18420"/>
    </cofactor>
    <text evidence="1">Binds 2 Mg(2+) ions per subunit.</text>
</comment>
<comment type="pathway">
    <text evidence="1">Metabolic intermediate biosynthesis; 5-phospho-alpha-D-ribose 1-diphosphate biosynthesis; 5-phospho-alpha-D-ribose 1-diphosphate from D-ribose 5-phosphate (route I): step 1/1.</text>
</comment>
<comment type="subunit">
    <text evidence="1">Homohexamer.</text>
</comment>
<comment type="subcellular location">
    <subcellularLocation>
        <location evidence="1">Cytoplasm</location>
    </subcellularLocation>
</comment>
<comment type="similarity">
    <text evidence="1">Belongs to the ribose-phosphate pyrophosphokinase family. Class I subfamily.</text>
</comment>
<keyword id="KW-0067">ATP-binding</keyword>
<keyword id="KW-0963">Cytoplasm</keyword>
<keyword id="KW-0418">Kinase</keyword>
<keyword id="KW-0460">Magnesium</keyword>
<keyword id="KW-0479">Metal-binding</keyword>
<keyword id="KW-0545">Nucleotide biosynthesis</keyword>
<keyword id="KW-0547">Nucleotide-binding</keyword>
<keyword id="KW-0808">Transferase</keyword>
<reference key="1">
    <citation type="journal article" date="2002" name="Science">
        <title>50 million years of genomic stasis in endosymbiotic bacteria.</title>
        <authorList>
            <person name="Tamas I."/>
            <person name="Klasson L."/>
            <person name="Canbaeck B."/>
            <person name="Naeslund A.K."/>
            <person name="Eriksson A.-S."/>
            <person name="Wernegreen J.J."/>
            <person name="Sandstroem J.P."/>
            <person name="Moran N.A."/>
            <person name="Andersson S.G.E."/>
        </authorList>
    </citation>
    <scope>NUCLEOTIDE SEQUENCE [LARGE SCALE GENOMIC DNA]</scope>
    <source>
        <strain>Sg</strain>
    </source>
</reference>
<feature type="chain" id="PRO_0000141119" description="Ribose-phosphate pyrophosphokinase">
    <location>
        <begin position="1"/>
        <end position="315"/>
    </location>
</feature>
<feature type="active site" evidence="1">
    <location>
        <position position="194"/>
    </location>
</feature>
<feature type="binding site" evidence="1">
    <location>
        <begin position="37"/>
        <end position="39"/>
    </location>
    <ligand>
        <name>ATP</name>
        <dbReference type="ChEBI" id="CHEBI:30616"/>
    </ligand>
</feature>
<feature type="binding site" evidence="1">
    <location>
        <begin position="96"/>
        <end position="97"/>
    </location>
    <ligand>
        <name>ATP</name>
        <dbReference type="ChEBI" id="CHEBI:30616"/>
    </ligand>
</feature>
<feature type="binding site" evidence="1">
    <location>
        <position position="131"/>
    </location>
    <ligand>
        <name>Mg(2+)</name>
        <dbReference type="ChEBI" id="CHEBI:18420"/>
        <label>1</label>
    </ligand>
</feature>
<feature type="binding site" evidence="1">
    <location>
        <position position="170"/>
    </location>
    <ligand>
        <name>Mg(2+)</name>
        <dbReference type="ChEBI" id="CHEBI:18420"/>
        <label>2</label>
    </ligand>
</feature>
<feature type="binding site" evidence="1">
    <location>
        <position position="196"/>
    </location>
    <ligand>
        <name>D-ribose 5-phosphate</name>
        <dbReference type="ChEBI" id="CHEBI:78346"/>
    </ligand>
</feature>
<feature type="binding site" evidence="1">
    <location>
        <position position="220"/>
    </location>
    <ligand>
        <name>D-ribose 5-phosphate</name>
        <dbReference type="ChEBI" id="CHEBI:78346"/>
    </ligand>
</feature>
<feature type="binding site" evidence="1">
    <location>
        <begin position="224"/>
        <end position="228"/>
    </location>
    <ligand>
        <name>D-ribose 5-phosphate</name>
        <dbReference type="ChEBI" id="CHEBI:78346"/>
    </ligand>
</feature>
<evidence type="ECO:0000255" key="1">
    <source>
        <dbReference type="HAMAP-Rule" id="MF_00583"/>
    </source>
</evidence>
<gene>
    <name evidence="1" type="primary">prs</name>
    <name type="synonym">prsA</name>
    <name type="ordered locus">BUsg_163</name>
</gene>
<proteinExistence type="inferred from homology"/>
<name>KPRS_BUCAP</name>